<comment type="function">
    <text evidence="1">Catalyzes the oxidation of 5,10-methylenetetrahydrofolate to 5,10-methenyltetrahydrofolate and then the hydrolysis of 5,10-methenyltetrahydrofolate to 10-formyltetrahydrofolate.</text>
</comment>
<comment type="catalytic activity">
    <reaction evidence="1">
        <text>(6R)-5,10-methylene-5,6,7,8-tetrahydrofolate + NADP(+) = (6R)-5,10-methenyltetrahydrofolate + NADPH</text>
        <dbReference type="Rhea" id="RHEA:22812"/>
        <dbReference type="ChEBI" id="CHEBI:15636"/>
        <dbReference type="ChEBI" id="CHEBI:57455"/>
        <dbReference type="ChEBI" id="CHEBI:57783"/>
        <dbReference type="ChEBI" id="CHEBI:58349"/>
        <dbReference type="EC" id="1.5.1.5"/>
    </reaction>
</comment>
<comment type="catalytic activity">
    <reaction evidence="1">
        <text>(6R)-5,10-methenyltetrahydrofolate + H2O = (6R)-10-formyltetrahydrofolate + H(+)</text>
        <dbReference type="Rhea" id="RHEA:23700"/>
        <dbReference type="ChEBI" id="CHEBI:15377"/>
        <dbReference type="ChEBI" id="CHEBI:15378"/>
        <dbReference type="ChEBI" id="CHEBI:57455"/>
        <dbReference type="ChEBI" id="CHEBI:195366"/>
        <dbReference type="EC" id="3.5.4.9"/>
    </reaction>
</comment>
<comment type="pathway">
    <text evidence="1">One-carbon metabolism; tetrahydrofolate interconversion.</text>
</comment>
<comment type="subunit">
    <text evidence="1">Homodimer.</text>
</comment>
<comment type="similarity">
    <text evidence="1">Belongs to the tetrahydrofolate dehydrogenase/cyclohydrolase family.</text>
</comment>
<organism>
    <name type="scientific">Mycobacterium leprae (strain TN)</name>
    <dbReference type="NCBI Taxonomy" id="272631"/>
    <lineage>
        <taxon>Bacteria</taxon>
        <taxon>Bacillati</taxon>
        <taxon>Actinomycetota</taxon>
        <taxon>Actinomycetes</taxon>
        <taxon>Mycobacteriales</taxon>
        <taxon>Mycobacteriaceae</taxon>
        <taxon>Mycobacterium</taxon>
    </lineage>
</organism>
<dbReference type="EC" id="1.5.1.5" evidence="1"/>
<dbReference type="EC" id="3.5.4.9" evidence="1"/>
<dbReference type="EMBL" id="Z98271">
    <property type="protein sequence ID" value="CAB10998.1"/>
    <property type="molecule type" value="Genomic_DNA"/>
</dbReference>
<dbReference type="EMBL" id="AL583919">
    <property type="protein sequence ID" value="CAC30183.1"/>
    <property type="molecule type" value="Genomic_DNA"/>
</dbReference>
<dbReference type="PIR" id="T45307">
    <property type="entry name" value="T45307"/>
</dbReference>
<dbReference type="RefSeq" id="NP_301545.1">
    <property type="nucleotide sequence ID" value="NC_002677.1"/>
</dbReference>
<dbReference type="RefSeq" id="WP_010907869.1">
    <property type="nucleotide sequence ID" value="NC_002677.1"/>
</dbReference>
<dbReference type="SMR" id="O32879"/>
<dbReference type="STRING" id="272631.gene:17574498"/>
<dbReference type="KEGG" id="mle:ML0674"/>
<dbReference type="PATRIC" id="fig|272631.5.peg.1200"/>
<dbReference type="Leproma" id="ML0674"/>
<dbReference type="eggNOG" id="COG0190">
    <property type="taxonomic scope" value="Bacteria"/>
</dbReference>
<dbReference type="HOGENOM" id="CLU_034045_3_0_11"/>
<dbReference type="OrthoDB" id="9803580at2"/>
<dbReference type="UniPathway" id="UPA00193"/>
<dbReference type="Proteomes" id="UP000000806">
    <property type="component" value="Chromosome"/>
</dbReference>
<dbReference type="GO" id="GO:0005829">
    <property type="term" value="C:cytosol"/>
    <property type="evidence" value="ECO:0007669"/>
    <property type="project" value="TreeGrafter"/>
</dbReference>
<dbReference type="GO" id="GO:0004477">
    <property type="term" value="F:methenyltetrahydrofolate cyclohydrolase activity"/>
    <property type="evidence" value="ECO:0007669"/>
    <property type="project" value="UniProtKB-UniRule"/>
</dbReference>
<dbReference type="GO" id="GO:0004488">
    <property type="term" value="F:methylenetetrahydrofolate dehydrogenase (NADP+) activity"/>
    <property type="evidence" value="ECO:0007669"/>
    <property type="project" value="UniProtKB-UniRule"/>
</dbReference>
<dbReference type="GO" id="GO:0000105">
    <property type="term" value="P:L-histidine biosynthetic process"/>
    <property type="evidence" value="ECO:0007669"/>
    <property type="project" value="UniProtKB-KW"/>
</dbReference>
<dbReference type="GO" id="GO:0009086">
    <property type="term" value="P:methionine biosynthetic process"/>
    <property type="evidence" value="ECO:0007669"/>
    <property type="project" value="UniProtKB-KW"/>
</dbReference>
<dbReference type="GO" id="GO:0006164">
    <property type="term" value="P:purine nucleotide biosynthetic process"/>
    <property type="evidence" value="ECO:0007669"/>
    <property type="project" value="UniProtKB-KW"/>
</dbReference>
<dbReference type="GO" id="GO:0035999">
    <property type="term" value="P:tetrahydrofolate interconversion"/>
    <property type="evidence" value="ECO:0007669"/>
    <property type="project" value="UniProtKB-UniRule"/>
</dbReference>
<dbReference type="CDD" id="cd01080">
    <property type="entry name" value="NAD_bind_m-THF_DH_Cyclohyd"/>
    <property type="match status" value="1"/>
</dbReference>
<dbReference type="FunFam" id="3.40.50.720:FF:000094">
    <property type="entry name" value="Bifunctional protein FolD"/>
    <property type="match status" value="1"/>
</dbReference>
<dbReference type="FunFam" id="3.40.50.10860:FF:000005">
    <property type="entry name" value="C-1-tetrahydrofolate synthase, cytoplasmic, putative"/>
    <property type="match status" value="1"/>
</dbReference>
<dbReference type="Gene3D" id="3.40.50.10860">
    <property type="entry name" value="Leucine Dehydrogenase, chain A, domain 1"/>
    <property type="match status" value="1"/>
</dbReference>
<dbReference type="Gene3D" id="3.40.50.720">
    <property type="entry name" value="NAD(P)-binding Rossmann-like Domain"/>
    <property type="match status" value="1"/>
</dbReference>
<dbReference type="HAMAP" id="MF_01576">
    <property type="entry name" value="THF_DHG_CYH"/>
    <property type="match status" value="1"/>
</dbReference>
<dbReference type="InterPro" id="IPR046346">
    <property type="entry name" value="Aminoacid_DH-like_N_sf"/>
</dbReference>
<dbReference type="InterPro" id="IPR036291">
    <property type="entry name" value="NAD(P)-bd_dom_sf"/>
</dbReference>
<dbReference type="InterPro" id="IPR000672">
    <property type="entry name" value="THF_DH/CycHdrlase"/>
</dbReference>
<dbReference type="InterPro" id="IPR020630">
    <property type="entry name" value="THF_DH/CycHdrlase_cat_dom"/>
</dbReference>
<dbReference type="InterPro" id="IPR020631">
    <property type="entry name" value="THF_DH/CycHdrlase_NAD-bd_dom"/>
</dbReference>
<dbReference type="NCBIfam" id="NF010789">
    <property type="entry name" value="PRK14193.1"/>
    <property type="match status" value="1"/>
</dbReference>
<dbReference type="PANTHER" id="PTHR48099:SF5">
    <property type="entry name" value="C-1-TETRAHYDROFOLATE SYNTHASE, CYTOPLASMIC"/>
    <property type="match status" value="1"/>
</dbReference>
<dbReference type="PANTHER" id="PTHR48099">
    <property type="entry name" value="C-1-TETRAHYDROFOLATE SYNTHASE, CYTOPLASMIC-RELATED"/>
    <property type="match status" value="1"/>
</dbReference>
<dbReference type="Pfam" id="PF00763">
    <property type="entry name" value="THF_DHG_CYH"/>
    <property type="match status" value="1"/>
</dbReference>
<dbReference type="Pfam" id="PF02882">
    <property type="entry name" value="THF_DHG_CYH_C"/>
    <property type="match status" value="1"/>
</dbReference>
<dbReference type="PRINTS" id="PR00085">
    <property type="entry name" value="THFDHDRGNASE"/>
</dbReference>
<dbReference type="SUPFAM" id="SSF53223">
    <property type="entry name" value="Aminoacid dehydrogenase-like, N-terminal domain"/>
    <property type="match status" value="1"/>
</dbReference>
<dbReference type="SUPFAM" id="SSF51735">
    <property type="entry name" value="NAD(P)-binding Rossmann-fold domains"/>
    <property type="match status" value="1"/>
</dbReference>
<name>FOLD_MYCLE</name>
<protein>
    <recommendedName>
        <fullName evidence="1">Bifunctional protein FolD</fullName>
    </recommendedName>
    <domain>
        <recommendedName>
            <fullName evidence="1">Methylenetetrahydrofolate dehydrogenase</fullName>
            <ecNumber evidence="1">1.5.1.5</ecNumber>
        </recommendedName>
    </domain>
    <domain>
        <recommendedName>
            <fullName evidence="1">Methenyltetrahydrofolate cyclohydrolase</fullName>
            <ecNumber evidence="1">3.5.4.9</ecNumber>
        </recommendedName>
    </domain>
</protein>
<feature type="chain" id="PRO_0000268401" description="Bifunctional protein FolD">
    <location>
        <begin position="1"/>
        <end position="282"/>
    </location>
</feature>
<feature type="binding site" evidence="1">
    <location>
        <begin position="165"/>
        <end position="167"/>
    </location>
    <ligand>
        <name>NADP(+)</name>
        <dbReference type="ChEBI" id="CHEBI:58349"/>
    </ligand>
</feature>
<feature type="binding site" evidence="1">
    <location>
        <position position="192"/>
    </location>
    <ligand>
        <name>NADP(+)</name>
        <dbReference type="ChEBI" id="CHEBI:58349"/>
    </ligand>
</feature>
<feature type="binding site" evidence="1">
    <location>
        <position position="233"/>
    </location>
    <ligand>
        <name>NADP(+)</name>
        <dbReference type="ChEBI" id="CHEBI:58349"/>
    </ligand>
</feature>
<keyword id="KW-0028">Amino-acid biosynthesis</keyword>
<keyword id="KW-0368">Histidine biosynthesis</keyword>
<keyword id="KW-0378">Hydrolase</keyword>
<keyword id="KW-0486">Methionine biosynthesis</keyword>
<keyword id="KW-0511">Multifunctional enzyme</keyword>
<keyword id="KW-0521">NADP</keyword>
<keyword id="KW-0554">One-carbon metabolism</keyword>
<keyword id="KW-0560">Oxidoreductase</keyword>
<keyword id="KW-0658">Purine biosynthesis</keyword>
<keyword id="KW-1185">Reference proteome</keyword>
<reference key="1">
    <citation type="journal article" date="2001" name="Nature">
        <title>Massive gene decay in the leprosy bacillus.</title>
        <authorList>
            <person name="Cole S.T."/>
            <person name="Eiglmeier K."/>
            <person name="Parkhill J."/>
            <person name="James K.D."/>
            <person name="Thomson N.R."/>
            <person name="Wheeler P.R."/>
            <person name="Honore N."/>
            <person name="Garnier T."/>
            <person name="Churcher C.M."/>
            <person name="Harris D.E."/>
            <person name="Mungall K.L."/>
            <person name="Basham D."/>
            <person name="Brown D."/>
            <person name="Chillingworth T."/>
            <person name="Connor R."/>
            <person name="Davies R.M."/>
            <person name="Devlin K."/>
            <person name="Duthoy S."/>
            <person name="Feltwell T."/>
            <person name="Fraser A."/>
            <person name="Hamlin N."/>
            <person name="Holroyd S."/>
            <person name="Hornsby T."/>
            <person name="Jagels K."/>
            <person name="Lacroix C."/>
            <person name="Maclean J."/>
            <person name="Moule S."/>
            <person name="Murphy L.D."/>
            <person name="Oliver K."/>
            <person name="Quail M.A."/>
            <person name="Rajandream M.A."/>
            <person name="Rutherford K.M."/>
            <person name="Rutter S."/>
            <person name="Seeger K."/>
            <person name="Simon S."/>
            <person name="Simmonds M."/>
            <person name="Skelton J."/>
            <person name="Squares R."/>
            <person name="Squares S."/>
            <person name="Stevens K."/>
            <person name="Taylor K."/>
            <person name="Whitehead S."/>
            <person name="Woodward J.R."/>
            <person name="Barrell B.G."/>
        </authorList>
    </citation>
    <scope>NUCLEOTIDE SEQUENCE [LARGE SCALE GENOMIC DNA]</scope>
    <source>
        <strain>TN</strain>
    </source>
</reference>
<proteinExistence type="inferred from homology"/>
<accession>O32879</accession>
<sequence length="282" mass="29835">MGAITLDGKATRDEILIDLKQRVAALTESGRTPGLGTILVGDDPGSHAYVRGKHADCAKVGITSIRRDLPVDITTAVLHDTIEELNANPDCTGYIVQLPLPKYLDENTALERVDPAKDADGLHPTNLGRLVLSTPAPLPCTARGILHLLRRYGVEIAGTHVVIIGRGVTVGRPLGLLLTRRSENATVTLCHTGTRNLAALTKQADIIVAAVGVPHLLTADMVRPGAVVVDVGVSRVETRLVGDVHPDVWEVAGHVSPNPGGVGPLTRVFLLTNVVELAEGRQ</sequence>
<evidence type="ECO:0000255" key="1">
    <source>
        <dbReference type="HAMAP-Rule" id="MF_01576"/>
    </source>
</evidence>
<gene>
    <name evidence="1" type="primary">folD</name>
    <name type="ordered locus">ML0674</name>
</gene>